<proteinExistence type="inferred from homology"/>
<evidence type="ECO:0000255" key="1">
    <source>
        <dbReference type="HAMAP-Rule" id="MF_00435"/>
    </source>
</evidence>
<evidence type="ECO:0000255" key="2">
    <source>
        <dbReference type="PROSITE-ProRule" id="PRU01197"/>
    </source>
</evidence>
<evidence type="ECO:0000255" key="3">
    <source>
        <dbReference type="PROSITE-ProRule" id="PRU01198"/>
    </source>
</evidence>
<evidence type="ECO:0000305" key="4"/>
<keyword id="KW-0028">Amino-acid biosynthesis</keyword>
<keyword id="KW-0100">Branched-chain amino acid biosynthesis</keyword>
<keyword id="KW-0460">Magnesium</keyword>
<keyword id="KW-0479">Metal-binding</keyword>
<keyword id="KW-0521">NADP</keyword>
<keyword id="KW-0560">Oxidoreductase</keyword>
<keyword id="KW-0677">Repeat</keyword>
<sequence>MANYFNTLNLRQQLAQLGKCRFMGRDEFADGASYLQGKKVVIVGCGAQGLNQGLNMRDSGLDISYALRKEAIAEKRASWRKATENGFKVGTYEELIPQADLVVNLTPDKQHSDVVRSVQPLMKDGAALGYSHGFNIVEVGEQIRKDITVVMVAPKCPGTEVREEYKRGFGVPTLIAVHPENDPKGEGMAIAKAWAAATGGHRAGVLESSFVAEVKSDLMGEQTILCGMLQAGSLLCFDKLVEEGTDPAYAEKLIQFGWETITEALKQGGITLMMDRLSNPAKLRAYALSEQLKEIMAPLFQKHMDDIISGEFSSGMMADWANDDKKLLTWREETGKTAFETAPQYEGKIGEQEYFDKGVLMIAMVKAGVELAFETMVDSGIIEESAYYESLHELPLIANTIARKRLYEMNVVISDTAEYGNYLFSYACVPLLKPFMAELQPGDLGKAIPEGAVDNAQLRDVNEAIRSHAIEQVGKKLRGYMTDMKRIAVAG</sequence>
<comment type="function">
    <text evidence="1">Involved in the biosynthesis of branched-chain amino acids (BCAA). Catalyzes an alkyl-migration followed by a ketol-acid reduction of (S)-2-acetolactate (S2AL) to yield (R)-2,3-dihydroxy-isovalerate. In the isomerase reaction, S2AL is rearranged via a Mg-dependent methyl migration to produce 3-hydroxy-3-methyl-2-ketobutyrate (HMKB). In the reductase reaction, this 2-ketoacid undergoes a metal-dependent reduction by NADPH to yield (R)-2,3-dihydroxy-isovalerate.</text>
</comment>
<comment type="catalytic activity">
    <reaction evidence="1">
        <text>(2R)-2,3-dihydroxy-3-methylbutanoate + NADP(+) = (2S)-2-acetolactate + NADPH + H(+)</text>
        <dbReference type="Rhea" id="RHEA:22068"/>
        <dbReference type="ChEBI" id="CHEBI:15378"/>
        <dbReference type="ChEBI" id="CHEBI:49072"/>
        <dbReference type="ChEBI" id="CHEBI:57783"/>
        <dbReference type="ChEBI" id="CHEBI:58349"/>
        <dbReference type="ChEBI" id="CHEBI:58476"/>
        <dbReference type="EC" id="1.1.1.86"/>
    </reaction>
</comment>
<comment type="catalytic activity">
    <reaction evidence="1">
        <text>(2R,3R)-2,3-dihydroxy-3-methylpentanoate + NADP(+) = (S)-2-ethyl-2-hydroxy-3-oxobutanoate + NADPH + H(+)</text>
        <dbReference type="Rhea" id="RHEA:13493"/>
        <dbReference type="ChEBI" id="CHEBI:15378"/>
        <dbReference type="ChEBI" id="CHEBI:49256"/>
        <dbReference type="ChEBI" id="CHEBI:49258"/>
        <dbReference type="ChEBI" id="CHEBI:57783"/>
        <dbReference type="ChEBI" id="CHEBI:58349"/>
        <dbReference type="EC" id="1.1.1.86"/>
    </reaction>
</comment>
<comment type="cofactor">
    <cofactor evidence="1">
        <name>Mg(2+)</name>
        <dbReference type="ChEBI" id="CHEBI:18420"/>
    </cofactor>
    <text evidence="1">Binds 2 magnesium ions per subunit.</text>
</comment>
<comment type="pathway">
    <text evidence="1">Amino-acid biosynthesis; L-isoleucine biosynthesis; L-isoleucine from 2-oxobutanoate: step 2/4.</text>
</comment>
<comment type="pathway">
    <text evidence="1">Amino-acid biosynthesis; L-valine biosynthesis; L-valine from pyruvate: step 2/4.</text>
</comment>
<comment type="similarity">
    <text evidence="1">Belongs to the ketol-acid reductoisomerase family.</text>
</comment>
<comment type="sequence caution" evidence="4">
    <conflict type="erroneous initiation">
        <sequence resource="EMBL-CDS" id="ABE09751"/>
    </conflict>
</comment>
<feature type="chain" id="PRO_0000252758" description="Ketol-acid reductoisomerase (NADP(+))">
    <location>
        <begin position="1"/>
        <end position="491"/>
    </location>
</feature>
<feature type="domain" description="KARI N-terminal Rossmann" evidence="2">
    <location>
        <begin position="15"/>
        <end position="208"/>
    </location>
</feature>
<feature type="domain" description="KARI C-terminal knotted 1" evidence="3">
    <location>
        <begin position="209"/>
        <end position="344"/>
    </location>
</feature>
<feature type="domain" description="KARI C-terminal knotted 2" evidence="3">
    <location>
        <begin position="345"/>
        <end position="484"/>
    </location>
</feature>
<feature type="active site" evidence="1">
    <location>
        <position position="132"/>
    </location>
</feature>
<feature type="binding site" evidence="1">
    <location>
        <begin position="45"/>
        <end position="48"/>
    </location>
    <ligand>
        <name>NADP(+)</name>
        <dbReference type="ChEBI" id="CHEBI:58349"/>
    </ligand>
</feature>
<feature type="binding site" evidence="1">
    <location>
        <position position="68"/>
    </location>
    <ligand>
        <name>NADP(+)</name>
        <dbReference type="ChEBI" id="CHEBI:58349"/>
    </ligand>
</feature>
<feature type="binding site" evidence="1">
    <location>
        <position position="76"/>
    </location>
    <ligand>
        <name>NADP(+)</name>
        <dbReference type="ChEBI" id="CHEBI:58349"/>
    </ligand>
</feature>
<feature type="binding site" evidence="1">
    <location>
        <position position="78"/>
    </location>
    <ligand>
        <name>NADP(+)</name>
        <dbReference type="ChEBI" id="CHEBI:58349"/>
    </ligand>
</feature>
<feature type="binding site" evidence="1">
    <location>
        <begin position="108"/>
        <end position="110"/>
    </location>
    <ligand>
        <name>NADP(+)</name>
        <dbReference type="ChEBI" id="CHEBI:58349"/>
    </ligand>
</feature>
<feature type="binding site" evidence="1">
    <location>
        <position position="158"/>
    </location>
    <ligand>
        <name>NADP(+)</name>
        <dbReference type="ChEBI" id="CHEBI:58349"/>
    </ligand>
</feature>
<feature type="binding site" evidence="1">
    <location>
        <position position="217"/>
    </location>
    <ligand>
        <name>Mg(2+)</name>
        <dbReference type="ChEBI" id="CHEBI:18420"/>
        <label>1</label>
    </ligand>
</feature>
<feature type="binding site" evidence="1">
    <location>
        <position position="217"/>
    </location>
    <ligand>
        <name>Mg(2+)</name>
        <dbReference type="ChEBI" id="CHEBI:18420"/>
        <label>2</label>
    </ligand>
</feature>
<feature type="binding site" evidence="1">
    <location>
        <position position="221"/>
    </location>
    <ligand>
        <name>Mg(2+)</name>
        <dbReference type="ChEBI" id="CHEBI:18420"/>
        <label>1</label>
    </ligand>
</feature>
<feature type="binding site" evidence="1">
    <location>
        <position position="389"/>
    </location>
    <ligand>
        <name>Mg(2+)</name>
        <dbReference type="ChEBI" id="CHEBI:18420"/>
        <label>2</label>
    </ligand>
</feature>
<feature type="binding site" evidence="1">
    <location>
        <position position="393"/>
    </location>
    <ligand>
        <name>Mg(2+)</name>
        <dbReference type="ChEBI" id="CHEBI:18420"/>
        <label>2</label>
    </ligand>
</feature>
<feature type="binding site" evidence="1">
    <location>
        <position position="414"/>
    </location>
    <ligand>
        <name>substrate</name>
    </ligand>
</feature>
<reference key="1">
    <citation type="journal article" date="2006" name="Proc. Natl. Acad. Sci. U.S.A.">
        <title>Identification of genes subject to positive selection in uropathogenic strains of Escherichia coli: a comparative genomics approach.</title>
        <authorList>
            <person name="Chen S.L."/>
            <person name="Hung C.-S."/>
            <person name="Xu J."/>
            <person name="Reigstad C.S."/>
            <person name="Magrini V."/>
            <person name="Sabo A."/>
            <person name="Blasiar D."/>
            <person name="Bieri T."/>
            <person name="Meyer R.R."/>
            <person name="Ozersky P."/>
            <person name="Armstrong J.R."/>
            <person name="Fulton R.S."/>
            <person name="Latreille J.P."/>
            <person name="Spieth J."/>
            <person name="Hooton T.M."/>
            <person name="Mardis E.R."/>
            <person name="Hultgren S.J."/>
            <person name="Gordon J.I."/>
        </authorList>
    </citation>
    <scope>NUCLEOTIDE SEQUENCE [LARGE SCALE GENOMIC DNA]</scope>
    <source>
        <strain>UTI89 / UPEC</strain>
    </source>
</reference>
<name>ILVC_ECOUT</name>
<gene>
    <name evidence="1" type="primary">ilvC</name>
    <name type="ordered locus">UTI89_C4330</name>
</gene>
<accession>Q1R4G3</accession>
<organism>
    <name type="scientific">Escherichia coli (strain UTI89 / UPEC)</name>
    <dbReference type="NCBI Taxonomy" id="364106"/>
    <lineage>
        <taxon>Bacteria</taxon>
        <taxon>Pseudomonadati</taxon>
        <taxon>Pseudomonadota</taxon>
        <taxon>Gammaproteobacteria</taxon>
        <taxon>Enterobacterales</taxon>
        <taxon>Enterobacteriaceae</taxon>
        <taxon>Escherichia</taxon>
    </lineage>
</organism>
<dbReference type="EC" id="1.1.1.86" evidence="1"/>
<dbReference type="EMBL" id="CP000243">
    <property type="protein sequence ID" value="ABE09751.1"/>
    <property type="status" value="ALT_INIT"/>
    <property type="molecule type" value="Genomic_DNA"/>
</dbReference>
<dbReference type="RefSeq" id="WP_001296589.1">
    <property type="nucleotide sequence ID" value="NZ_CP064825.1"/>
</dbReference>
<dbReference type="SMR" id="Q1R4G3"/>
<dbReference type="KEGG" id="eci:UTI89_C4330"/>
<dbReference type="HOGENOM" id="CLU_551905_0_0_6"/>
<dbReference type="UniPathway" id="UPA00047">
    <property type="reaction ID" value="UER00056"/>
</dbReference>
<dbReference type="UniPathway" id="UPA00049">
    <property type="reaction ID" value="UER00060"/>
</dbReference>
<dbReference type="Proteomes" id="UP000001952">
    <property type="component" value="Chromosome"/>
</dbReference>
<dbReference type="GO" id="GO:0005829">
    <property type="term" value="C:cytosol"/>
    <property type="evidence" value="ECO:0007669"/>
    <property type="project" value="TreeGrafter"/>
</dbReference>
<dbReference type="GO" id="GO:0004455">
    <property type="term" value="F:ketol-acid reductoisomerase activity"/>
    <property type="evidence" value="ECO:0007669"/>
    <property type="project" value="UniProtKB-UniRule"/>
</dbReference>
<dbReference type="GO" id="GO:0000287">
    <property type="term" value="F:magnesium ion binding"/>
    <property type="evidence" value="ECO:0007669"/>
    <property type="project" value="UniProtKB-UniRule"/>
</dbReference>
<dbReference type="GO" id="GO:0009097">
    <property type="term" value="P:isoleucine biosynthetic process"/>
    <property type="evidence" value="ECO:0007669"/>
    <property type="project" value="UniProtKB-UniRule"/>
</dbReference>
<dbReference type="GO" id="GO:0009099">
    <property type="term" value="P:L-valine biosynthetic process"/>
    <property type="evidence" value="ECO:0007669"/>
    <property type="project" value="UniProtKB-UniRule"/>
</dbReference>
<dbReference type="FunFam" id="1.10.1040.10:FF:000007">
    <property type="entry name" value="Ketol-acid reductoisomerase (NADP(+))"/>
    <property type="match status" value="1"/>
</dbReference>
<dbReference type="FunFam" id="3.40.50.720:FF:000043">
    <property type="entry name" value="Ketol-acid reductoisomerase (NADP(+))"/>
    <property type="match status" value="1"/>
</dbReference>
<dbReference type="Gene3D" id="1.10.1040.10">
    <property type="entry name" value="N-(1-d-carboxylethyl)-l-norvaline Dehydrogenase, domain 2"/>
    <property type="match status" value="1"/>
</dbReference>
<dbReference type="Gene3D" id="3.40.50.720">
    <property type="entry name" value="NAD(P)-binding Rossmann-like Domain"/>
    <property type="match status" value="1"/>
</dbReference>
<dbReference type="HAMAP" id="MF_00435">
    <property type="entry name" value="IlvC"/>
    <property type="match status" value="1"/>
</dbReference>
<dbReference type="InterPro" id="IPR008927">
    <property type="entry name" value="6-PGluconate_DH-like_C_sf"/>
</dbReference>
<dbReference type="InterPro" id="IPR013328">
    <property type="entry name" value="6PGD_dom2"/>
</dbReference>
<dbReference type="InterPro" id="IPR013023">
    <property type="entry name" value="KARI"/>
</dbReference>
<dbReference type="InterPro" id="IPR000506">
    <property type="entry name" value="KARI_C"/>
</dbReference>
<dbReference type="InterPro" id="IPR013116">
    <property type="entry name" value="KARI_N"/>
</dbReference>
<dbReference type="InterPro" id="IPR036291">
    <property type="entry name" value="NAD(P)-bd_dom_sf"/>
</dbReference>
<dbReference type="NCBIfam" id="TIGR00465">
    <property type="entry name" value="ilvC"/>
    <property type="match status" value="1"/>
</dbReference>
<dbReference type="NCBIfam" id="NF003557">
    <property type="entry name" value="PRK05225.1"/>
    <property type="match status" value="1"/>
</dbReference>
<dbReference type="PANTHER" id="PTHR21371">
    <property type="entry name" value="KETOL-ACID REDUCTOISOMERASE, MITOCHONDRIAL"/>
    <property type="match status" value="1"/>
</dbReference>
<dbReference type="PANTHER" id="PTHR21371:SF1">
    <property type="entry name" value="KETOL-ACID REDUCTOISOMERASE, MITOCHONDRIAL"/>
    <property type="match status" value="1"/>
</dbReference>
<dbReference type="Pfam" id="PF01450">
    <property type="entry name" value="KARI_C"/>
    <property type="match status" value="2"/>
</dbReference>
<dbReference type="Pfam" id="PF07991">
    <property type="entry name" value="KARI_N"/>
    <property type="match status" value="1"/>
</dbReference>
<dbReference type="SUPFAM" id="SSF48179">
    <property type="entry name" value="6-phosphogluconate dehydrogenase C-terminal domain-like"/>
    <property type="match status" value="2"/>
</dbReference>
<dbReference type="SUPFAM" id="SSF51735">
    <property type="entry name" value="NAD(P)-binding Rossmann-fold domains"/>
    <property type="match status" value="1"/>
</dbReference>
<dbReference type="PROSITE" id="PS51851">
    <property type="entry name" value="KARI_C"/>
    <property type="match status" value="2"/>
</dbReference>
<dbReference type="PROSITE" id="PS51850">
    <property type="entry name" value="KARI_N"/>
    <property type="match status" value="1"/>
</dbReference>
<protein>
    <recommendedName>
        <fullName evidence="1">Ketol-acid reductoisomerase (NADP(+))</fullName>
        <shortName evidence="1">KARI</shortName>
        <ecNumber evidence="1">1.1.1.86</ecNumber>
    </recommendedName>
    <alternativeName>
        <fullName evidence="1">Acetohydroxy-acid isomeroreductase</fullName>
        <shortName evidence="1">AHIR</shortName>
    </alternativeName>
    <alternativeName>
        <fullName evidence="1">Alpha-keto-beta-hydroxylacyl reductoisomerase</fullName>
    </alternativeName>
    <alternativeName>
        <fullName evidence="1">Ketol-acid reductoisomerase type 2</fullName>
    </alternativeName>
    <alternativeName>
        <fullName evidence="1">Ketol-acid reductoisomerase type II</fullName>
    </alternativeName>
</protein>